<gene>
    <name evidence="1" type="primary">pepT</name>
    <name type="ordered locus">Ecok1_10170</name>
    <name type="ORF">APECO1_209</name>
</gene>
<accession>A1AA21</accession>
<keyword id="KW-0031">Aminopeptidase</keyword>
<keyword id="KW-0963">Cytoplasm</keyword>
<keyword id="KW-0378">Hydrolase</keyword>
<keyword id="KW-0479">Metal-binding</keyword>
<keyword id="KW-0482">Metalloprotease</keyword>
<keyword id="KW-0645">Protease</keyword>
<keyword id="KW-1185">Reference proteome</keyword>
<keyword id="KW-0862">Zinc</keyword>
<proteinExistence type="inferred from homology"/>
<sequence length="408" mass="44909">MDKLLERFLNYVSLDTQSKAGVRQVPSTEGQWKLLHLLKEQLEEMGLINVTLSEKGTLMATLPANVPGDIPAIGFISHVDTSPDCSGKNVNPQIVENYRGGDIALGIGDEVLSPVMFPVLHQLLGQTLITTDGKTLLGADDKAGIAEIMTALAVLQQKNIPHGDIRVAFTPDEEVGKGAKHFDVDAFDARWAYTVDGGGVGELEFENFNAASVNIKIVGNNVHPGTAKGVMVNALSLAARIHAEVPADESPEMTEGYEGFYHLASMKGTVERADMHYIIRDFDRKQFEARKRKMMEIAKKVGKGLHPDCYIELVIEDSYYNMREKVVEHPHILDIAQQAMRDCDIEPELKPIRGGTDGAQLSFMGLPCPNLFTGGYNYHGKHEFVTLEGMEKAVQVIVRIAELTAQRK</sequence>
<evidence type="ECO:0000255" key="1">
    <source>
        <dbReference type="HAMAP-Rule" id="MF_00550"/>
    </source>
</evidence>
<name>PEPT_ECOK1</name>
<dbReference type="EC" id="3.4.11.4" evidence="1"/>
<dbReference type="EMBL" id="CP000468">
    <property type="protein sequence ID" value="ABJ00511.1"/>
    <property type="molecule type" value="Genomic_DNA"/>
</dbReference>
<dbReference type="RefSeq" id="WP_000359446.1">
    <property type="nucleotide sequence ID" value="NZ_CADILS010000019.1"/>
</dbReference>
<dbReference type="SMR" id="A1AA21"/>
<dbReference type="MEROPS" id="M20.003"/>
<dbReference type="GeneID" id="93776283"/>
<dbReference type="KEGG" id="ecv:APECO1_209"/>
<dbReference type="HOGENOM" id="CLU_053676_0_0_6"/>
<dbReference type="Proteomes" id="UP000008216">
    <property type="component" value="Chromosome"/>
</dbReference>
<dbReference type="GO" id="GO:0005829">
    <property type="term" value="C:cytosol"/>
    <property type="evidence" value="ECO:0007669"/>
    <property type="project" value="TreeGrafter"/>
</dbReference>
<dbReference type="GO" id="GO:0008237">
    <property type="term" value="F:metallopeptidase activity"/>
    <property type="evidence" value="ECO:0007669"/>
    <property type="project" value="UniProtKB-KW"/>
</dbReference>
<dbReference type="GO" id="GO:0045148">
    <property type="term" value="F:tripeptide aminopeptidase activity"/>
    <property type="evidence" value="ECO:0007669"/>
    <property type="project" value="UniProtKB-UniRule"/>
</dbReference>
<dbReference type="GO" id="GO:0008270">
    <property type="term" value="F:zinc ion binding"/>
    <property type="evidence" value="ECO:0007669"/>
    <property type="project" value="UniProtKB-UniRule"/>
</dbReference>
<dbReference type="GO" id="GO:0043171">
    <property type="term" value="P:peptide catabolic process"/>
    <property type="evidence" value="ECO:0007669"/>
    <property type="project" value="UniProtKB-UniRule"/>
</dbReference>
<dbReference type="GO" id="GO:0006508">
    <property type="term" value="P:proteolysis"/>
    <property type="evidence" value="ECO:0007669"/>
    <property type="project" value="UniProtKB-UniRule"/>
</dbReference>
<dbReference type="CDD" id="cd03892">
    <property type="entry name" value="M20_peptT"/>
    <property type="match status" value="1"/>
</dbReference>
<dbReference type="FunFam" id="3.30.70.360:FF:000002">
    <property type="entry name" value="Peptidase T"/>
    <property type="match status" value="1"/>
</dbReference>
<dbReference type="Gene3D" id="3.30.70.360">
    <property type="match status" value="1"/>
</dbReference>
<dbReference type="Gene3D" id="3.40.630.10">
    <property type="entry name" value="Zn peptidases"/>
    <property type="match status" value="1"/>
</dbReference>
<dbReference type="HAMAP" id="MF_00550">
    <property type="entry name" value="Aminopeptidase_M20"/>
    <property type="match status" value="1"/>
</dbReference>
<dbReference type="InterPro" id="IPR001261">
    <property type="entry name" value="ArgE/DapE_CS"/>
</dbReference>
<dbReference type="InterPro" id="IPR036264">
    <property type="entry name" value="Bact_exopeptidase_dim_dom"/>
</dbReference>
<dbReference type="InterPro" id="IPR002933">
    <property type="entry name" value="Peptidase_M20"/>
</dbReference>
<dbReference type="InterPro" id="IPR011650">
    <property type="entry name" value="Peptidase_M20_dimer"/>
</dbReference>
<dbReference type="InterPro" id="IPR010161">
    <property type="entry name" value="Peptidase_M20B"/>
</dbReference>
<dbReference type="NCBIfam" id="TIGR01882">
    <property type="entry name" value="peptidase-T"/>
    <property type="match status" value="1"/>
</dbReference>
<dbReference type="NCBIfam" id="NF003976">
    <property type="entry name" value="PRK05469.1"/>
    <property type="match status" value="1"/>
</dbReference>
<dbReference type="NCBIfam" id="NF009920">
    <property type="entry name" value="PRK13381.1"/>
    <property type="match status" value="1"/>
</dbReference>
<dbReference type="PANTHER" id="PTHR42994">
    <property type="entry name" value="PEPTIDASE T"/>
    <property type="match status" value="1"/>
</dbReference>
<dbReference type="PANTHER" id="PTHR42994:SF1">
    <property type="entry name" value="PEPTIDASE T"/>
    <property type="match status" value="1"/>
</dbReference>
<dbReference type="Pfam" id="PF07687">
    <property type="entry name" value="M20_dimer"/>
    <property type="match status" value="1"/>
</dbReference>
<dbReference type="Pfam" id="PF01546">
    <property type="entry name" value="Peptidase_M20"/>
    <property type="match status" value="1"/>
</dbReference>
<dbReference type="PIRSF" id="PIRSF037215">
    <property type="entry name" value="Peptidase_M20B"/>
    <property type="match status" value="1"/>
</dbReference>
<dbReference type="SUPFAM" id="SSF55031">
    <property type="entry name" value="Bacterial exopeptidase dimerisation domain"/>
    <property type="match status" value="1"/>
</dbReference>
<dbReference type="SUPFAM" id="SSF53187">
    <property type="entry name" value="Zn-dependent exopeptidases"/>
    <property type="match status" value="1"/>
</dbReference>
<dbReference type="PROSITE" id="PS00758">
    <property type="entry name" value="ARGE_DAPE_CPG2_1"/>
    <property type="match status" value="1"/>
</dbReference>
<dbReference type="PROSITE" id="PS00759">
    <property type="entry name" value="ARGE_DAPE_CPG2_2"/>
    <property type="match status" value="1"/>
</dbReference>
<reference key="1">
    <citation type="journal article" date="2007" name="J. Bacteriol.">
        <title>The genome sequence of avian pathogenic Escherichia coli strain O1:K1:H7 shares strong similarities with human extraintestinal pathogenic E. coli genomes.</title>
        <authorList>
            <person name="Johnson T.J."/>
            <person name="Kariyawasam S."/>
            <person name="Wannemuehler Y."/>
            <person name="Mangiamele P."/>
            <person name="Johnson S.J."/>
            <person name="Doetkott C."/>
            <person name="Skyberg J.A."/>
            <person name="Lynne A.M."/>
            <person name="Johnson J.R."/>
            <person name="Nolan L.K."/>
        </authorList>
    </citation>
    <scope>NUCLEOTIDE SEQUENCE [LARGE SCALE GENOMIC DNA]</scope>
</reference>
<protein>
    <recommendedName>
        <fullName evidence="1">Peptidase T</fullName>
        <ecNumber evidence="1">3.4.11.4</ecNumber>
    </recommendedName>
    <alternativeName>
        <fullName evidence="1">Aminotripeptidase</fullName>
        <shortName evidence="1">Tripeptidase</shortName>
    </alternativeName>
    <alternativeName>
        <fullName evidence="1">Tripeptide aminopeptidase</fullName>
    </alternativeName>
</protein>
<comment type="function">
    <text evidence="1">Cleaves the N-terminal amino acid of tripeptides.</text>
</comment>
<comment type="catalytic activity">
    <reaction evidence="1">
        <text>Release of the N-terminal residue from a tripeptide.</text>
        <dbReference type="EC" id="3.4.11.4"/>
    </reaction>
</comment>
<comment type="cofactor">
    <cofactor evidence="1">
        <name>Zn(2+)</name>
        <dbReference type="ChEBI" id="CHEBI:29105"/>
    </cofactor>
    <text evidence="1">Binds 2 Zn(2+) ions per subunit.</text>
</comment>
<comment type="subcellular location">
    <subcellularLocation>
        <location evidence="1">Cytoplasm</location>
    </subcellularLocation>
</comment>
<comment type="similarity">
    <text evidence="1">Belongs to the peptidase M20B family.</text>
</comment>
<organism>
    <name type="scientific">Escherichia coli O1:K1 / APEC</name>
    <dbReference type="NCBI Taxonomy" id="405955"/>
    <lineage>
        <taxon>Bacteria</taxon>
        <taxon>Pseudomonadati</taxon>
        <taxon>Pseudomonadota</taxon>
        <taxon>Gammaproteobacteria</taxon>
        <taxon>Enterobacterales</taxon>
        <taxon>Enterobacteriaceae</taxon>
        <taxon>Escherichia</taxon>
    </lineage>
</organism>
<feature type="chain" id="PRO_1000017844" description="Peptidase T">
    <location>
        <begin position="1"/>
        <end position="408"/>
    </location>
</feature>
<feature type="active site" evidence="1">
    <location>
        <position position="80"/>
    </location>
</feature>
<feature type="active site" description="Proton acceptor" evidence="1">
    <location>
        <position position="173"/>
    </location>
</feature>
<feature type="binding site" evidence="1">
    <location>
        <position position="78"/>
    </location>
    <ligand>
        <name>Zn(2+)</name>
        <dbReference type="ChEBI" id="CHEBI:29105"/>
        <label>1</label>
    </ligand>
</feature>
<feature type="binding site" evidence="1">
    <location>
        <position position="140"/>
    </location>
    <ligand>
        <name>Zn(2+)</name>
        <dbReference type="ChEBI" id="CHEBI:29105"/>
        <label>1</label>
    </ligand>
</feature>
<feature type="binding site" evidence="1">
    <location>
        <position position="140"/>
    </location>
    <ligand>
        <name>Zn(2+)</name>
        <dbReference type="ChEBI" id="CHEBI:29105"/>
        <label>2</label>
    </ligand>
</feature>
<feature type="binding site" evidence="1">
    <location>
        <position position="174"/>
    </location>
    <ligand>
        <name>Zn(2+)</name>
        <dbReference type="ChEBI" id="CHEBI:29105"/>
        <label>2</label>
    </ligand>
</feature>
<feature type="binding site" evidence="1">
    <location>
        <position position="196"/>
    </location>
    <ligand>
        <name>Zn(2+)</name>
        <dbReference type="ChEBI" id="CHEBI:29105"/>
        <label>1</label>
    </ligand>
</feature>
<feature type="binding site" evidence="1">
    <location>
        <position position="379"/>
    </location>
    <ligand>
        <name>Zn(2+)</name>
        <dbReference type="ChEBI" id="CHEBI:29105"/>
        <label>2</label>
    </ligand>
</feature>